<sequence>MKYIGAHVSAAGGLANAAIRAAEIDATAFALFTKNQRQWRAAPLTTQTIDEFKAACEKYHYTSAQILPHDSYLINLGHPVAEALEKSRDAFIDEMQRCEQLGLSLLNFHPGSHLMQISEEDCLARIAESINIALDKTQGVTAVIENTAGQGSNLGFKFEHLAAIIDGVEDKSRVGVCIDTCHAFAAGYDLRTPAECEKTFADFARIVGFKYLHGMHLNDAKSTFGSRVDRHHSLGEGNIGHDAFRWIMQDDRFDGIPLILETINPDIWAEEIAWLKAQQTEKAVA</sequence>
<evidence type="ECO:0000255" key="1">
    <source>
        <dbReference type="HAMAP-Rule" id="MF_00152"/>
    </source>
</evidence>
<organism>
    <name type="scientific">Escherichia coli O1:K1 / APEC</name>
    <dbReference type="NCBI Taxonomy" id="405955"/>
    <lineage>
        <taxon>Bacteria</taxon>
        <taxon>Pseudomonadati</taxon>
        <taxon>Pseudomonadota</taxon>
        <taxon>Gammaproteobacteria</taxon>
        <taxon>Enterobacterales</taxon>
        <taxon>Enterobacteriaceae</taxon>
        <taxon>Escherichia</taxon>
    </lineage>
</organism>
<feature type="chain" id="PRO_1000011303" description="Probable endonuclease 4">
    <location>
        <begin position="1"/>
        <end position="285"/>
    </location>
</feature>
<feature type="binding site" evidence="1">
    <location>
        <position position="69"/>
    </location>
    <ligand>
        <name>Zn(2+)</name>
        <dbReference type="ChEBI" id="CHEBI:29105"/>
        <label>1</label>
    </ligand>
</feature>
<feature type="binding site" evidence="1">
    <location>
        <position position="109"/>
    </location>
    <ligand>
        <name>Zn(2+)</name>
        <dbReference type="ChEBI" id="CHEBI:29105"/>
        <label>1</label>
    </ligand>
</feature>
<feature type="binding site" evidence="1">
    <location>
        <position position="145"/>
    </location>
    <ligand>
        <name>Zn(2+)</name>
        <dbReference type="ChEBI" id="CHEBI:29105"/>
        <label>1</label>
    </ligand>
</feature>
<feature type="binding site" evidence="1">
    <location>
        <position position="145"/>
    </location>
    <ligand>
        <name>Zn(2+)</name>
        <dbReference type="ChEBI" id="CHEBI:29105"/>
        <label>2</label>
    </ligand>
</feature>
<feature type="binding site" evidence="1">
    <location>
        <position position="179"/>
    </location>
    <ligand>
        <name>Zn(2+)</name>
        <dbReference type="ChEBI" id="CHEBI:29105"/>
        <label>2</label>
    </ligand>
</feature>
<feature type="binding site" evidence="1">
    <location>
        <position position="182"/>
    </location>
    <ligand>
        <name>Zn(2+)</name>
        <dbReference type="ChEBI" id="CHEBI:29105"/>
        <label>3</label>
    </ligand>
</feature>
<feature type="binding site" evidence="1">
    <location>
        <position position="216"/>
    </location>
    <ligand>
        <name>Zn(2+)</name>
        <dbReference type="ChEBI" id="CHEBI:29105"/>
        <label>2</label>
    </ligand>
</feature>
<feature type="binding site" evidence="1">
    <location>
        <position position="229"/>
    </location>
    <ligand>
        <name>Zn(2+)</name>
        <dbReference type="ChEBI" id="CHEBI:29105"/>
        <label>3</label>
    </ligand>
</feature>
<feature type="binding site" evidence="1">
    <location>
        <position position="231"/>
    </location>
    <ligand>
        <name>Zn(2+)</name>
        <dbReference type="ChEBI" id="CHEBI:29105"/>
        <label>3</label>
    </ligand>
</feature>
<feature type="binding site" evidence="1">
    <location>
        <position position="261"/>
    </location>
    <ligand>
        <name>Zn(2+)</name>
        <dbReference type="ChEBI" id="CHEBI:29105"/>
        <label>2</label>
    </ligand>
</feature>
<keyword id="KW-0227">DNA damage</keyword>
<keyword id="KW-0234">DNA repair</keyword>
<keyword id="KW-0255">Endonuclease</keyword>
<keyword id="KW-0378">Hydrolase</keyword>
<keyword id="KW-0479">Metal-binding</keyword>
<keyword id="KW-0540">Nuclease</keyword>
<keyword id="KW-1185">Reference proteome</keyword>
<keyword id="KW-0862">Zinc</keyword>
<protein>
    <recommendedName>
        <fullName evidence="1">Probable endonuclease 4</fullName>
        <ecNumber evidence="1">3.1.21.2</ecNumber>
    </recommendedName>
    <alternativeName>
        <fullName evidence="1">Endodeoxyribonuclease IV</fullName>
    </alternativeName>
    <alternativeName>
        <fullName evidence="1">Endonuclease IV</fullName>
    </alternativeName>
</protein>
<name>END4_ECOK1</name>
<proteinExistence type="inferred from homology"/>
<dbReference type="EC" id="3.1.21.2" evidence="1"/>
<dbReference type="EMBL" id="CP000468">
    <property type="protein sequence ID" value="ABJ01558.1"/>
    <property type="molecule type" value="Genomic_DNA"/>
</dbReference>
<dbReference type="RefSeq" id="WP_000873879.1">
    <property type="nucleotide sequence ID" value="NZ_CADILS010000004.1"/>
</dbReference>
<dbReference type="SMR" id="A1AD18"/>
<dbReference type="KEGG" id="ecv:APECO1_4393"/>
<dbReference type="HOGENOM" id="CLU_025885_0_4_6"/>
<dbReference type="Proteomes" id="UP000008216">
    <property type="component" value="Chromosome"/>
</dbReference>
<dbReference type="GO" id="GO:0008833">
    <property type="term" value="F:deoxyribonuclease IV (phage-T4-induced) activity"/>
    <property type="evidence" value="ECO:0007669"/>
    <property type="project" value="UniProtKB-UniRule"/>
</dbReference>
<dbReference type="GO" id="GO:0003677">
    <property type="term" value="F:DNA binding"/>
    <property type="evidence" value="ECO:0007669"/>
    <property type="project" value="InterPro"/>
</dbReference>
<dbReference type="GO" id="GO:0003906">
    <property type="term" value="F:DNA-(apurinic or apyrimidinic site) endonuclease activity"/>
    <property type="evidence" value="ECO:0007669"/>
    <property type="project" value="TreeGrafter"/>
</dbReference>
<dbReference type="GO" id="GO:0008081">
    <property type="term" value="F:phosphoric diester hydrolase activity"/>
    <property type="evidence" value="ECO:0007669"/>
    <property type="project" value="TreeGrafter"/>
</dbReference>
<dbReference type="GO" id="GO:0008270">
    <property type="term" value="F:zinc ion binding"/>
    <property type="evidence" value="ECO:0007669"/>
    <property type="project" value="UniProtKB-UniRule"/>
</dbReference>
<dbReference type="GO" id="GO:0006284">
    <property type="term" value="P:base-excision repair"/>
    <property type="evidence" value="ECO:0007669"/>
    <property type="project" value="TreeGrafter"/>
</dbReference>
<dbReference type="CDD" id="cd00019">
    <property type="entry name" value="AP2Ec"/>
    <property type="match status" value="1"/>
</dbReference>
<dbReference type="FunFam" id="3.20.20.150:FF:000001">
    <property type="entry name" value="Probable endonuclease 4"/>
    <property type="match status" value="1"/>
</dbReference>
<dbReference type="Gene3D" id="3.20.20.150">
    <property type="entry name" value="Divalent-metal-dependent TIM barrel enzymes"/>
    <property type="match status" value="1"/>
</dbReference>
<dbReference type="HAMAP" id="MF_00152">
    <property type="entry name" value="Nfo"/>
    <property type="match status" value="1"/>
</dbReference>
<dbReference type="InterPro" id="IPR001719">
    <property type="entry name" value="AP_endonuc_2"/>
</dbReference>
<dbReference type="InterPro" id="IPR018246">
    <property type="entry name" value="AP_endonuc_F2_Zn_BS"/>
</dbReference>
<dbReference type="InterPro" id="IPR036237">
    <property type="entry name" value="Xyl_isomerase-like_sf"/>
</dbReference>
<dbReference type="InterPro" id="IPR013022">
    <property type="entry name" value="Xyl_isomerase-like_TIM-brl"/>
</dbReference>
<dbReference type="NCBIfam" id="TIGR00587">
    <property type="entry name" value="nfo"/>
    <property type="match status" value="1"/>
</dbReference>
<dbReference type="NCBIfam" id="NF002199">
    <property type="entry name" value="PRK01060.1-4"/>
    <property type="match status" value="1"/>
</dbReference>
<dbReference type="PANTHER" id="PTHR21445:SF0">
    <property type="entry name" value="APURINIC-APYRIMIDINIC ENDONUCLEASE"/>
    <property type="match status" value="1"/>
</dbReference>
<dbReference type="PANTHER" id="PTHR21445">
    <property type="entry name" value="ENDONUCLEASE IV ENDODEOXYRIBONUCLEASE IV"/>
    <property type="match status" value="1"/>
</dbReference>
<dbReference type="Pfam" id="PF01261">
    <property type="entry name" value="AP_endonuc_2"/>
    <property type="match status" value="1"/>
</dbReference>
<dbReference type="SMART" id="SM00518">
    <property type="entry name" value="AP2Ec"/>
    <property type="match status" value="1"/>
</dbReference>
<dbReference type="SUPFAM" id="SSF51658">
    <property type="entry name" value="Xylose isomerase-like"/>
    <property type="match status" value="1"/>
</dbReference>
<dbReference type="PROSITE" id="PS00729">
    <property type="entry name" value="AP_NUCLEASE_F2_1"/>
    <property type="match status" value="1"/>
</dbReference>
<dbReference type="PROSITE" id="PS00730">
    <property type="entry name" value="AP_NUCLEASE_F2_2"/>
    <property type="match status" value="1"/>
</dbReference>
<dbReference type="PROSITE" id="PS00731">
    <property type="entry name" value="AP_NUCLEASE_F2_3"/>
    <property type="match status" value="1"/>
</dbReference>
<dbReference type="PROSITE" id="PS51432">
    <property type="entry name" value="AP_NUCLEASE_F2_4"/>
    <property type="match status" value="1"/>
</dbReference>
<accession>A1AD18</accession>
<gene>
    <name evidence="1" type="primary">nfo</name>
    <name type="ordered locus">Ecok1_20640</name>
    <name type="ORF">APECO1_4393</name>
</gene>
<comment type="function">
    <text evidence="1">Endonuclease IV plays a role in DNA repair. It cleaves phosphodiester bonds at apurinic or apyrimidinic (AP) sites, generating a 3'-hydroxyl group and a 5'-terminal sugar phosphate.</text>
</comment>
<comment type="catalytic activity">
    <reaction evidence="1">
        <text>Endonucleolytic cleavage to 5'-phosphooligonucleotide end-products.</text>
        <dbReference type="EC" id="3.1.21.2"/>
    </reaction>
</comment>
<comment type="cofactor">
    <cofactor evidence="1">
        <name>Zn(2+)</name>
        <dbReference type="ChEBI" id="CHEBI:29105"/>
    </cofactor>
    <text evidence="1">Binds 3 Zn(2+) ions.</text>
</comment>
<comment type="similarity">
    <text evidence="1">Belongs to the AP endonuclease 2 family.</text>
</comment>
<reference key="1">
    <citation type="journal article" date="2007" name="J. Bacteriol.">
        <title>The genome sequence of avian pathogenic Escherichia coli strain O1:K1:H7 shares strong similarities with human extraintestinal pathogenic E. coli genomes.</title>
        <authorList>
            <person name="Johnson T.J."/>
            <person name="Kariyawasam S."/>
            <person name="Wannemuehler Y."/>
            <person name="Mangiamele P."/>
            <person name="Johnson S.J."/>
            <person name="Doetkott C."/>
            <person name="Skyberg J.A."/>
            <person name="Lynne A.M."/>
            <person name="Johnson J.R."/>
            <person name="Nolan L.K."/>
        </authorList>
    </citation>
    <scope>NUCLEOTIDE SEQUENCE [LARGE SCALE GENOMIC DNA]</scope>
</reference>